<keyword id="KW-0028">Amino-acid biosynthesis</keyword>
<keyword id="KW-0963">Cytoplasm</keyword>
<keyword id="KW-0554">One-carbon metabolism</keyword>
<keyword id="KW-0663">Pyridoxal phosphate</keyword>
<keyword id="KW-0808">Transferase</keyword>
<evidence type="ECO:0000255" key="1">
    <source>
        <dbReference type="HAMAP-Rule" id="MF_00051"/>
    </source>
</evidence>
<protein>
    <recommendedName>
        <fullName evidence="1">Serine hydroxymethyltransferase</fullName>
        <shortName evidence="1">SHMT</shortName>
        <shortName evidence="1">Serine methylase</shortName>
        <ecNumber evidence="1">2.1.2.1</ecNumber>
    </recommendedName>
</protein>
<proteinExistence type="inferred from homology"/>
<feature type="chain" id="PRO_1000057371" description="Serine hydroxymethyltransferase">
    <location>
        <begin position="1"/>
        <end position="417"/>
    </location>
</feature>
<feature type="binding site" evidence="1">
    <location>
        <position position="121"/>
    </location>
    <ligand>
        <name>(6S)-5,6,7,8-tetrahydrofolate</name>
        <dbReference type="ChEBI" id="CHEBI:57453"/>
    </ligand>
</feature>
<feature type="binding site" evidence="1">
    <location>
        <begin position="125"/>
        <end position="127"/>
    </location>
    <ligand>
        <name>(6S)-5,6,7,8-tetrahydrofolate</name>
        <dbReference type="ChEBI" id="CHEBI:57453"/>
    </ligand>
</feature>
<feature type="binding site" evidence="1">
    <location>
        <begin position="355"/>
        <end position="357"/>
    </location>
    <ligand>
        <name>(6S)-5,6,7,8-tetrahydrofolate</name>
        <dbReference type="ChEBI" id="CHEBI:57453"/>
    </ligand>
</feature>
<feature type="site" description="Plays an important role in substrate specificity" evidence="1">
    <location>
        <position position="228"/>
    </location>
</feature>
<feature type="modified residue" description="N6-(pyridoxal phosphate)lysine" evidence="1">
    <location>
        <position position="229"/>
    </location>
</feature>
<dbReference type="EC" id="2.1.2.1" evidence="1"/>
<dbReference type="EMBL" id="CP000826">
    <property type="protein sequence ID" value="ABV42734.1"/>
    <property type="molecule type" value="Genomic_DNA"/>
</dbReference>
<dbReference type="SMR" id="A8GHZ4"/>
<dbReference type="STRING" id="399741.Spro_3638"/>
<dbReference type="KEGG" id="spe:Spro_3638"/>
<dbReference type="eggNOG" id="COG0112">
    <property type="taxonomic scope" value="Bacteria"/>
</dbReference>
<dbReference type="HOGENOM" id="CLU_022477_2_1_6"/>
<dbReference type="OrthoDB" id="9803846at2"/>
<dbReference type="UniPathway" id="UPA00193"/>
<dbReference type="UniPathway" id="UPA00288">
    <property type="reaction ID" value="UER01023"/>
</dbReference>
<dbReference type="GO" id="GO:0005829">
    <property type="term" value="C:cytosol"/>
    <property type="evidence" value="ECO:0007669"/>
    <property type="project" value="TreeGrafter"/>
</dbReference>
<dbReference type="GO" id="GO:0004372">
    <property type="term" value="F:glycine hydroxymethyltransferase activity"/>
    <property type="evidence" value="ECO:0007669"/>
    <property type="project" value="UniProtKB-UniRule"/>
</dbReference>
<dbReference type="GO" id="GO:0030170">
    <property type="term" value="F:pyridoxal phosphate binding"/>
    <property type="evidence" value="ECO:0007669"/>
    <property type="project" value="UniProtKB-UniRule"/>
</dbReference>
<dbReference type="GO" id="GO:0019264">
    <property type="term" value="P:glycine biosynthetic process from serine"/>
    <property type="evidence" value="ECO:0007669"/>
    <property type="project" value="UniProtKB-UniRule"/>
</dbReference>
<dbReference type="GO" id="GO:0035999">
    <property type="term" value="P:tetrahydrofolate interconversion"/>
    <property type="evidence" value="ECO:0007669"/>
    <property type="project" value="UniProtKB-UniRule"/>
</dbReference>
<dbReference type="CDD" id="cd00378">
    <property type="entry name" value="SHMT"/>
    <property type="match status" value="1"/>
</dbReference>
<dbReference type="FunFam" id="3.40.640.10:FF:000001">
    <property type="entry name" value="Serine hydroxymethyltransferase"/>
    <property type="match status" value="1"/>
</dbReference>
<dbReference type="FunFam" id="3.90.1150.10:FF:000003">
    <property type="entry name" value="Serine hydroxymethyltransferase"/>
    <property type="match status" value="1"/>
</dbReference>
<dbReference type="Gene3D" id="3.90.1150.10">
    <property type="entry name" value="Aspartate Aminotransferase, domain 1"/>
    <property type="match status" value="1"/>
</dbReference>
<dbReference type="Gene3D" id="3.40.640.10">
    <property type="entry name" value="Type I PLP-dependent aspartate aminotransferase-like (Major domain)"/>
    <property type="match status" value="1"/>
</dbReference>
<dbReference type="HAMAP" id="MF_00051">
    <property type="entry name" value="SHMT"/>
    <property type="match status" value="1"/>
</dbReference>
<dbReference type="InterPro" id="IPR015424">
    <property type="entry name" value="PyrdxlP-dep_Trfase"/>
</dbReference>
<dbReference type="InterPro" id="IPR015421">
    <property type="entry name" value="PyrdxlP-dep_Trfase_major"/>
</dbReference>
<dbReference type="InterPro" id="IPR015422">
    <property type="entry name" value="PyrdxlP-dep_Trfase_small"/>
</dbReference>
<dbReference type="InterPro" id="IPR001085">
    <property type="entry name" value="Ser_HO-MeTrfase"/>
</dbReference>
<dbReference type="InterPro" id="IPR049943">
    <property type="entry name" value="Ser_HO-MeTrfase-like"/>
</dbReference>
<dbReference type="InterPro" id="IPR019798">
    <property type="entry name" value="Ser_HO-MeTrfase_PLP_BS"/>
</dbReference>
<dbReference type="InterPro" id="IPR039429">
    <property type="entry name" value="SHMT-like_dom"/>
</dbReference>
<dbReference type="NCBIfam" id="NF000586">
    <property type="entry name" value="PRK00011.1"/>
    <property type="match status" value="1"/>
</dbReference>
<dbReference type="PANTHER" id="PTHR11680">
    <property type="entry name" value="SERINE HYDROXYMETHYLTRANSFERASE"/>
    <property type="match status" value="1"/>
</dbReference>
<dbReference type="PANTHER" id="PTHR11680:SF50">
    <property type="entry name" value="SERINE HYDROXYMETHYLTRANSFERASE"/>
    <property type="match status" value="1"/>
</dbReference>
<dbReference type="Pfam" id="PF00464">
    <property type="entry name" value="SHMT"/>
    <property type="match status" value="1"/>
</dbReference>
<dbReference type="PIRSF" id="PIRSF000412">
    <property type="entry name" value="SHMT"/>
    <property type="match status" value="1"/>
</dbReference>
<dbReference type="SUPFAM" id="SSF53383">
    <property type="entry name" value="PLP-dependent transferases"/>
    <property type="match status" value="1"/>
</dbReference>
<dbReference type="PROSITE" id="PS00096">
    <property type="entry name" value="SHMT"/>
    <property type="match status" value="1"/>
</dbReference>
<accession>A8GHZ4</accession>
<comment type="function">
    <text evidence="1">Catalyzes the reversible interconversion of serine and glycine with tetrahydrofolate (THF) serving as the one-carbon carrier. This reaction serves as the major source of one-carbon groups required for the biosynthesis of purines, thymidylate, methionine, and other important biomolecules. Also exhibits THF-independent aldolase activity toward beta-hydroxyamino acids, producing glycine and aldehydes, via a retro-aldol mechanism.</text>
</comment>
<comment type="catalytic activity">
    <reaction evidence="1">
        <text>(6R)-5,10-methylene-5,6,7,8-tetrahydrofolate + glycine + H2O = (6S)-5,6,7,8-tetrahydrofolate + L-serine</text>
        <dbReference type="Rhea" id="RHEA:15481"/>
        <dbReference type="ChEBI" id="CHEBI:15377"/>
        <dbReference type="ChEBI" id="CHEBI:15636"/>
        <dbReference type="ChEBI" id="CHEBI:33384"/>
        <dbReference type="ChEBI" id="CHEBI:57305"/>
        <dbReference type="ChEBI" id="CHEBI:57453"/>
        <dbReference type="EC" id="2.1.2.1"/>
    </reaction>
</comment>
<comment type="cofactor">
    <cofactor evidence="1">
        <name>pyridoxal 5'-phosphate</name>
        <dbReference type="ChEBI" id="CHEBI:597326"/>
    </cofactor>
</comment>
<comment type="pathway">
    <text evidence="1">One-carbon metabolism; tetrahydrofolate interconversion.</text>
</comment>
<comment type="pathway">
    <text evidence="1">Amino-acid biosynthesis; glycine biosynthesis; glycine from L-serine: step 1/1.</text>
</comment>
<comment type="subunit">
    <text evidence="1">Homodimer.</text>
</comment>
<comment type="subcellular location">
    <subcellularLocation>
        <location evidence="1">Cytoplasm</location>
    </subcellularLocation>
</comment>
<comment type="similarity">
    <text evidence="1">Belongs to the SHMT family.</text>
</comment>
<sequence length="417" mass="45417">MLKREMNIADYDAELWRAMEQEVVRQEEHIELIASENYTSPRVMQAQGSQLTNKYAEGYPGKRYYGGCEYVDIVEQLAIDRAKELFGADYANVQPHSGSQANFAVYTALLQPGDTILGMNLAHGGHLTHGSPVNLSGKLYNVVPYGIDEKGQIDYEDLAKQAQTHKPKMIIGGFSAFSGIVDWAKMREIADSIGAYLFVDMAHVAGLIAAGVYPNPVPHAHIVTTTTHKTLAGPRGGLILAKGGDEDLYKKLNSAVFPGGQGGPLMHVIAGKAVALKEAMEPEFKIYQQQVAKNAKAMVEVVLERGYKVVSGGTHNHLFLLDLVDKNLTGKEADAALGRANITVNKNSVPNDPKSPFVTSGVRIGTPAVTRRGFKEADVRELAGWICDVLDNINDEATIERTKKKVLDICARLPVYA</sequence>
<gene>
    <name evidence="1" type="primary">glyA</name>
    <name type="ordered locus">Spro_3638</name>
</gene>
<name>GLYA_SERP5</name>
<organism>
    <name type="scientific">Serratia proteamaculans (strain 568)</name>
    <dbReference type="NCBI Taxonomy" id="399741"/>
    <lineage>
        <taxon>Bacteria</taxon>
        <taxon>Pseudomonadati</taxon>
        <taxon>Pseudomonadota</taxon>
        <taxon>Gammaproteobacteria</taxon>
        <taxon>Enterobacterales</taxon>
        <taxon>Yersiniaceae</taxon>
        <taxon>Serratia</taxon>
    </lineage>
</organism>
<reference key="1">
    <citation type="submission" date="2007-09" db="EMBL/GenBank/DDBJ databases">
        <title>Complete sequence of chromosome of Serratia proteamaculans 568.</title>
        <authorList>
            <consortium name="US DOE Joint Genome Institute"/>
            <person name="Copeland A."/>
            <person name="Lucas S."/>
            <person name="Lapidus A."/>
            <person name="Barry K."/>
            <person name="Glavina del Rio T."/>
            <person name="Dalin E."/>
            <person name="Tice H."/>
            <person name="Pitluck S."/>
            <person name="Chain P."/>
            <person name="Malfatti S."/>
            <person name="Shin M."/>
            <person name="Vergez L."/>
            <person name="Schmutz J."/>
            <person name="Larimer F."/>
            <person name="Land M."/>
            <person name="Hauser L."/>
            <person name="Kyrpides N."/>
            <person name="Kim E."/>
            <person name="Taghavi S."/>
            <person name="Newman L."/>
            <person name="Vangronsveld J."/>
            <person name="van der Lelie D."/>
            <person name="Richardson P."/>
        </authorList>
    </citation>
    <scope>NUCLEOTIDE SEQUENCE [LARGE SCALE GENOMIC DNA]</scope>
    <source>
        <strain>568</strain>
    </source>
</reference>